<organism>
    <name type="scientific">Debaryomyces hansenii (strain ATCC 36239 / CBS 767 / BCRC 21394 / JCM 1990 / NBRC 0083 / IGC 2968)</name>
    <name type="common">Yeast</name>
    <name type="synonym">Torulaspora hansenii</name>
    <dbReference type="NCBI Taxonomy" id="284592"/>
    <lineage>
        <taxon>Eukaryota</taxon>
        <taxon>Fungi</taxon>
        <taxon>Dikarya</taxon>
        <taxon>Ascomycota</taxon>
        <taxon>Saccharomycotina</taxon>
        <taxon>Pichiomycetes</taxon>
        <taxon>Debaryomycetaceae</taxon>
        <taxon>Debaryomyces</taxon>
    </lineage>
</organism>
<name>ATM_DEBHA</name>
<keyword id="KW-0067">ATP-binding</keyword>
<keyword id="KW-0156">Chromatin regulator</keyword>
<keyword id="KW-0158">Chromosome</keyword>
<keyword id="KW-0227">DNA damage</keyword>
<keyword id="KW-0418">Kinase</keyword>
<keyword id="KW-0547">Nucleotide-binding</keyword>
<keyword id="KW-0539">Nucleus</keyword>
<keyword id="KW-1185">Reference proteome</keyword>
<keyword id="KW-0723">Serine/threonine-protein kinase</keyword>
<keyword id="KW-0779">Telomere</keyword>
<keyword id="KW-0808">Transferase</keyword>
<evidence type="ECO:0000250" key="1"/>
<evidence type="ECO:0000255" key="2">
    <source>
        <dbReference type="PROSITE-ProRule" id="PRU00269"/>
    </source>
</evidence>
<evidence type="ECO:0000255" key="3">
    <source>
        <dbReference type="PROSITE-ProRule" id="PRU00534"/>
    </source>
</evidence>
<evidence type="ECO:0000255" key="4">
    <source>
        <dbReference type="PROSITE-ProRule" id="PRU00535"/>
    </source>
</evidence>
<evidence type="ECO:0000305" key="5"/>
<gene>
    <name type="primary">TEL1</name>
    <name type="ordered locus">DEHA2C04752g</name>
</gene>
<dbReference type="EC" id="2.7.11.1"/>
<dbReference type="EMBL" id="CR382135">
    <property type="protein sequence ID" value="CAG85943.2"/>
    <property type="status" value="ALT_INIT"/>
    <property type="molecule type" value="Genomic_DNA"/>
</dbReference>
<dbReference type="RefSeq" id="XP_457893.2">
    <property type="nucleotide sequence ID" value="XM_457893.1"/>
</dbReference>
<dbReference type="SMR" id="Q6BV76"/>
<dbReference type="FunCoup" id="Q6BV76">
    <property type="interactions" value="99"/>
</dbReference>
<dbReference type="STRING" id="284592.Q6BV76"/>
<dbReference type="GeneID" id="2900195"/>
<dbReference type="KEGG" id="dha:DEHA2C04752g"/>
<dbReference type="eggNOG" id="KOG0892">
    <property type="taxonomic scope" value="Eukaryota"/>
</dbReference>
<dbReference type="HOGENOM" id="CLU_000178_8_1_1"/>
<dbReference type="InParanoid" id="Q6BV76"/>
<dbReference type="OrthoDB" id="381190at2759"/>
<dbReference type="Proteomes" id="UP000000599">
    <property type="component" value="Chromosome C"/>
</dbReference>
<dbReference type="GO" id="GO:0000781">
    <property type="term" value="C:chromosome, telomeric region"/>
    <property type="evidence" value="ECO:0007669"/>
    <property type="project" value="UniProtKB-SubCell"/>
</dbReference>
<dbReference type="GO" id="GO:0005634">
    <property type="term" value="C:nucleus"/>
    <property type="evidence" value="ECO:0007669"/>
    <property type="project" value="UniProtKB-SubCell"/>
</dbReference>
<dbReference type="GO" id="GO:0005524">
    <property type="term" value="F:ATP binding"/>
    <property type="evidence" value="ECO:0007669"/>
    <property type="project" value="UniProtKB-KW"/>
</dbReference>
<dbReference type="GO" id="GO:0106310">
    <property type="term" value="F:protein serine kinase activity"/>
    <property type="evidence" value="ECO:0007669"/>
    <property type="project" value="RHEA"/>
</dbReference>
<dbReference type="GO" id="GO:0004674">
    <property type="term" value="F:protein serine/threonine kinase activity"/>
    <property type="evidence" value="ECO:0007669"/>
    <property type="project" value="UniProtKB-KW"/>
</dbReference>
<dbReference type="GO" id="GO:0006325">
    <property type="term" value="P:chromatin organization"/>
    <property type="evidence" value="ECO:0007669"/>
    <property type="project" value="UniProtKB-KW"/>
</dbReference>
<dbReference type="GO" id="GO:0006281">
    <property type="term" value="P:DNA repair"/>
    <property type="evidence" value="ECO:0007669"/>
    <property type="project" value="InterPro"/>
</dbReference>
<dbReference type="GO" id="GO:0035556">
    <property type="term" value="P:intracellular signal transduction"/>
    <property type="evidence" value="ECO:0007669"/>
    <property type="project" value="UniProtKB-ARBA"/>
</dbReference>
<dbReference type="CDD" id="cd05171">
    <property type="entry name" value="PIKKc_ATM"/>
    <property type="match status" value="1"/>
</dbReference>
<dbReference type="FunFam" id="3.30.1010.10:FF:000032">
    <property type="entry name" value="Serine/threonine-protein kinase TEL1"/>
    <property type="match status" value="1"/>
</dbReference>
<dbReference type="Gene3D" id="1.10.1070.11">
    <property type="entry name" value="Phosphatidylinositol 3-/4-kinase, catalytic domain"/>
    <property type="match status" value="1"/>
</dbReference>
<dbReference type="Gene3D" id="3.30.1010.10">
    <property type="entry name" value="Phosphatidylinositol 3-kinase Catalytic Subunit, Chain A, domain 4"/>
    <property type="match status" value="1"/>
</dbReference>
<dbReference type="InterPro" id="IPR038980">
    <property type="entry name" value="ATM_plant"/>
</dbReference>
<dbReference type="InterPro" id="IPR003152">
    <property type="entry name" value="FATC_dom"/>
</dbReference>
<dbReference type="InterPro" id="IPR011009">
    <property type="entry name" value="Kinase-like_dom_sf"/>
</dbReference>
<dbReference type="InterPro" id="IPR000403">
    <property type="entry name" value="PI3/4_kinase_cat_dom"/>
</dbReference>
<dbReference type="InterPro" id="IPR036940">
    <property type="entry name" value="PI3/4_kinase_cat_sf"/>
</dbReference>
<dbReference type="InterPro" id="IPR018936">
    <property type="entry name" value="PI3/4_kinase_CS"/>
</dbReference>
<dbReference type="InterPro" id="IPR014009">
    <property type="entry name" value="PIK_FAT"/>
</dbReference>
<dbReference type="InterPro" id="IPR044107">
    <property type="entry name" value="PIKKc_ATM"/>
</dbReference>
<dbReference type="InterPro" id="IPR021668">
    <property type="entry name" value="TAN"/>
</dbReference>
<dbReference type="PANTHER" id="PTHR37079">
    <property type="entry name" value="SERINE/THREONINE-PROTEIN KINASE ATM"/>
    <property type="match status" value="1"/>
</dbReference>
<dbReference type="PANTHER" id="PTHR37079:SF4">
    <property type="entry name" value="SERINE_THREONINE-PROTEIN KINASE ATM"/>
    <property type="match status" value="1"/>
</dbReference>
<dbReference type="Pfam" id="PF02260">
    <property type="entry name" value="FATC"/>
    <property type="match status" value="1"/>
</dbReference>
<dbReference type="Pfam" id="PF00454">
    <property type="entry name" value="PI3_PI4_kinase"/>
    <property type="match status" value="1"/>
</dbReference>
<dbReference type="Pfam" id="PF11640">
    <property type="entry name" value="TAN"/>
    <property type="match status" value="1"/>
</dbReference>
<dbReference type="SMART" id="SM01343">
    <property type="entry name" value="FATC"/>
    <property type="match status" value="1"/>
</dbReference>
<dbReference type="SMART" id="SM00146">
    <property type="entry name" value="PI3Kc"/>
    <property type="match status" value="1"/>
</dbReference>
<dbReference type="SMART" id="SM01342">
    <property type="entry name" value="TAN"/>
    <property type="match status" value="1"/>
</dbReference>
<dbReference type="SUPFAM" id="SSF56112">
    <property type="entry name" value="Protein kinase-like (PK-like)"/>
    <property type="match status" value="1"/>
</dbReference>
<dbReference type="PROSITE" id="PS51189">
    <property type="entry name" value="FAT"/>
    <property type="match status" value="1"/>
</dbReference>
<dbReference type="PROSITE" id="PS51190">
    <property type="entry name" value="FATC"/>
    <property type="match status" value="1"/>
</dbReference>
<dbReference type="PROSITE" id="PS00915">
    <property type="entry name" value="PI3_4_KINASE_1"/>
    <property type="match status" value="1"/>
</dbReference>
<dbReference type="PROSITE" id="PS00916">
    <property type="entry name" value="PI3_4_KINASE_2"/>
    <property type="match status" value="1"/>
</dbReference>
<dbReference type="PROSITE" id="PS50290">
    <property type="entry name" value="PI3_4_KINASE_3"/>
    <property type="match status" value="1"/>
</dbReference>
<comment type="function">
    <text evidence="1">Serine/threonine protein kinase which activates checkpoint signaling upon genotoxic stresses such as ionizing radiation (IR), ultraviolet light (UV), or DNA replication stalling, thereby acting as a DNA damage sensor. Recognizes the substrate consensus sequence [ST]-Q. Phosphorylates histone H2A to form H2AS128ph (gamma-H2A) at sites of DNA damage, involved in the regulation of DNA damage response mechanism. Required for the control of telomere length and genome stability (By similarity).</text>
</comment>
<comment type="catalytic activity">
    <reaction>
        <text>L-seryl-[protein] + ATP = O-phospho-L-seryl-[protein] + ADP + H(+)</text>
        <dbReference type="Rhea" id="RHEA:17989"/>
        <dbReference type="Rhea" id="RHEA-COMP:9863"/>
        <dbReference type="Rhea" id="RHEA-COMP:11604"/>
        <dbReference type="ChEBI" id="CHEBI:15378"/>
        <dbReference type="ChEBI" id="CHEBI:29999"/>
        <dbReference type="ChEBI" id="CHEBI:30616"/>
        <dbReference type="ChEBI" id="CHEBI:83421"/>
        <dbReference type="ChEBI" id="CHEBI:456216"/>
        <dbReference type="EC" id="2.7.11.1"/>
    </reaction>
</comment>
<comment type="catalytic activity">
    <reaction>
        <text>L-threonyl-[protein] + ATP = O-phospho-L-threonyl-[protein] + ADP + H(+)</text>
        <dbReference type="Rhea" id="RHEA:46608"/>
        <dbReference type="Rhea" id="RHEA-COMP:11060"/>
        <dbReference type="Rhea" id="RHEA-COMP:11605"/>
        <dbReference type="ChEBI" id="CHEBI:15378"/>
        <dbReference type="ChEBI" id="CHEBI:30013"/>
        <dbReference type="ChEBI" id="CHEBI:30616"/>
        <dbReference type="ChEBI" id="CHEBI:61977"/>
        <dbReference type="ChEBI" id="CHEBI:456216"/>
        <dbReference type="EC" id="2.7.11.1"/>
    </reaction>
</comment>
<comment type="subunit">
    <text evidence="1">Associates with DNA double-strand breaks.</text>
</comment>
<comment type="subcellular location">
    <subcellularLocation>
        <location evidence="1">Nucleus</location>
    </subcellularLocation>
    <subcellularLocation>
        <location evidence="1">Chromosome</location>
        <location evidence="1">Telomere</location>
    </subcellularLocation>
    <text evidence="1">Localizes to nuclear DNA repair foci with other DNA repair proteins in response to DNA double strand breaks.</text>
</comment>
<comment type="similarity">
    <text evidence="5">Belongs to the PI3/PI4-kinase family. ATM subfamily.</text>
</comment>
<comment type="sequence caution" evidence="5">
    <conflict type="erroneous initiation">
        <sequence resource="EMBL-CDS" id="CAG85943"/>
    </conflict>
</comment>
<reference key="1">
    <citation type="journal article" date="2004" name="Nature">
        <title>Genome evolution in yeasts.</title>
        <authorList>
            <person name="Dujon B."/>
            <person name="Sherman D."/>
            <person name="Fischer G."/>
            <person name="Durrens P."/>
            <person name="Casaregola S."/>
            <person name="Lafontaine I."/>
            <person name="de Montigny J."/>
            <person name="Marck C."/>
            <person name="Neuveglise C."/>
            <person name="Talla E."/>
            <person name="Goffard N."/>
            <person name="Frangeul L."/>
            <person name="Aigle M."/>
            <person name="Anthouard V."/>
            <person name="Babour A."/>
            <person name="Barbe V."/>
            <person name="Barnay S."/>
            <person name="Blanchin S."/>
            <person name="Beckerich J.-M."/>
            <person name="Beyne E."/>
            <person name="Bleykasten C."/>
            <person name="Boisrame A."/>
            <person name="Boyer J."/>
            <person name="Cattolico L."/>
            <person name="Confanioleri F."/>
            <person name="de Daruvar A."/>
            <person name="Despons L."/>
            <person name="Fabre E."/>
            <person name="Fairhead C."/>
            <person name="Ferry-Dumazet H."/>
            <person name="Groppi A."/>
            <person name="Hantraye F."/>
            <person name="Hennequin C."/>
            <person name="Jauniaux N."/>
            <person name="Joyet P."/>
            <person name="Kachouri R."/>
            <person name="Kerrest A."/>
            <person name="Koszul R."/>
            <person name="Lemaire M."/>
            <person name="Lesur I."/>
            <person name="Ma L."/>
            <person name="Muller H."/>
            <person name="Nicaud J.-M."/>
            <person name="Nikolski M."/>
            <person name="Oztas S."/>
            <person name="Ozier-Kalogeropoulos O."/>
            <person name="Pellenz S."/>
            <person name="Potier S."/>
            <person name="Richard G.-F."/>
            <person name="Straub M.-L."/>
            <person name="Suleau A."/>
            <person name="Swennen D."/>
            <person name="Tekaia F."/>
            <person name="Wesolowski-Louvel M."/>
            <person name="Westhof E."/>
            <person name="Wirth B."/>
            <person name="Zeniou-Meyer M."/>
            <person name="Zivanovic Y."/>
            <person name="Bolotin-Fukuhara M."/>
            <person name="Thierry A."/>
            <person name="Bouchier C."/>
            <person name="Caudron B."/>
            <person name="Scarpelli C."/>
            <person name="Gaillardin C."/>
            <person name="Weissenbach J."/>
            <person name="Wincker P."/>
            <person name="Souciet J.-L."/>
        </authorList>
    </citation>
    <scope>NUCLEOTIDE SEQUENCE [LARGE SCALE GENOMIC DNA]</scope>
    <source>
        <strain>ATCC 36239 / CBS 767 / BCRC 21394 / JCM 1990 / NBRC 0083 / IGC 2968</strain>
    </source>
</reference>
<protein>
    <recommendedName>
        <fullName>Serine/threonine-protein kinase TEL1</fullName>
        <ecNumber>2.7.11.1</ecNumber>
    </recommendedName>
    <alternativeName>
        <fullName>ATM homolog</fullName>
    </alternativeName>
    <alternativeName>
        <fullName>DNA-damage checkpoint kinase TEL1</fullName>
    </alternativeName>
    <alternativeName>
        <fullName>Telomere length regulation protein 1</fullName>
    </alternativeName>
</protein>
<sequence length="2948" mass="339163">MSSFDINKLVSCLQSTKIKDRNDGLSSVENLLNSKFKLNPKQFDVLVISMFTLIENEQISYLKNKASSAEFRLSYGSNCLKLLIEKSLDYNQELRNSNKPIKMKYKFYMSIIHSIRNYYFIEDNILEPCALDFTKILSSITSQGFFKEHLNYEDWLHIYNLLIKSSSFILDELTKINMHEKLLVEIFTSLHFLIQADSSISVNYLQLVSSSVPNNYFKLLKILSKTCNFFKKESMLTVLLFKIINKLIITLCTENFKFVNKLIQISIKLMISFHQTQLDSLQVQFLIFMNLSATHSFLNLHNFPKLIGDSSIISDDPFDSRQDISIRSSEDSSKTNQSIDSITDGDNDEVILYNVGILIQNLVSKLYSSNNQVKSEDINFMRKPTDDKNWFKLRSIYLRVSEYDEPDSLQPWLFNAGLSKFINSYFEFKKSLYEHNTINSLNTFNASIVRSDSIHQNKRQKLNILSEALYHSNNILDFCNKLIIDKTDYKVQQTGMQILTFYLEVYSPRVEISPLRNITSNNDVKLSGSSSTKNSSILDMSDSTLLNSTFDFPLTTNDSESQFNVNLIFKNVINAFDTDELNYWSLMATRAIIYDSLQRSIKIEEKYFFQLLKIALQLIKNKEVSRISCSLVYSIISRHSNEGLNKIMEKSLIIQIDNLIDLSEISGPFSICEESFQLWYSINKLVRNINLARNFILAERIQAWLISKWDIAANINIGFWYSNPSSHFEFVNFICWLCGINIEQSNQQNLLDLYCGVLNEANIFMNSYNELEVFFLNNCNVRDNTSSWIEIDIDNLSENKTSDDLLIRIIETGKNYLKEESVSVEAFEWAILEFRIVRLLKDHDIHNQLINSIQYQASDLLECINVMNATSNISDFIKVLSRTNFMLMKGGSIEIISTSFELGNFFDKISGNGLMYNANQRLLQQDQCSNNDNIDMFHDEFTSTNEPKTNFQTESKSTILNCINLGYVDVSCVQALKCLLIRNKIQGDSSVKTFDLIVKFLESLRSPEVLYCLFYLCRLLESGDLERSEIPIVSWTRIIRILGEGPLTNFDLERDELTIIIVSKLLTISFPIWHDNPDDAFKKDCLDMCSWLLQCGTKNLILTEASCIEFLIFMIAYSRYNNQTIIENNEIKSLFIKTFTKSTNNIKIKILPSLVNYLKSISVTDQMAIYKELFLNFDTPQQSIETCGTFCLFFCILSEASIQVTIAVIFNFMEYSRFEYFLPYIKGAFSLIYKRLNLKSTKELFNLFKYEILKSWWSYNFDIKQFPYDLFDYDDISSFLSSNCKELIAVSISNANNSNSGFLEMISSVKETDLASLVFDSLTLAIPLAYTREGIRNDMFKKLSDILKDQYRLQMKEKVTTIIFEVIKFTDMSNEKYIRDLGPKNEVTLQLFKNNSQILETPGSVSISLHSSLDLIRGLVEKYSVNPKSFWQVNVLYFLFRHISIILHNSVNVEQKLLCLRKFKLLIILGHKNIFSLQLANLLITTLSPFLKESDLHEDVANILSIFRIQKLGKYDESEFLPFIVKLVSCLVEVDGTITSINSRLLKTLEEYVTLSNKNRKVHVILQASMNVLKSKPIELTSSDIEFFLNDEAELKLCTMGVSNKHVMKLVSSIFMIVEFYDETRLHENVVKLLLNQKDTQQSKKFKLWSAEYLANYYLNGGLNNKISHIVSLVENDTLLEDTFESDISSMDNILNEILRYIVSDNLEIAACAESILGVLIWKFKTRKSDVQKFLNFDKHENDYASFIVPLDFHSCILLNSNDDELRILGHSIKEIISNLGQSLEGISFETWTSRLFLSITQELAKFTSIAPLFSSFATKVDSFSKTVLPGFICYYLNTTGKEGASQVIKLLSEFAKLRSYESDFIELLMQILLKIRIGAKKSIPIFMEVYSSLNINYFYEIAAKHKYFKTALMLFEDDVSKHEKHIDWSSNSRLLSNIYESIDNEDLIFGLPEETSLEYAINMINRRNETSDQLKFDSGLFDTNISFDLERRNTGILNSMVRNGFLGVSKLVSKSLNNVDTNNASFEWAWKLNCWDIPCPREANEEHQLIYKTLKQIHDYPSFASESCQESLLQTLHIKDAIINCCSSPKELRLNIERWLISLTCISNIRDVLRYKESDFRISLHEFSQRTDWFEQADFDMSENILLARKAALQITGDLSSDCMSLKKESIWLCVLHDLIRYNSIAIIAKESQKSVNSIVMINEISKTKFSESDHLLRDSISQLTKYQIARTLWQQGHTSIPVIMLKESQQNEAINTSISSMNITPSLINANLVDWMSNSRQDLASNIMAKYVLPTADMVTYVKELDQKAKVYEILANFCETQFRSLSLNDHVYKLEKSVDLKKSEIEELKSHYSRMPVAADEKKNAQRYYSKLKAQYIGELSDLNSLKGSICEFSDKAVEFYLKSILTDGDNDENLDKFFALWLEHSNKDDLHVSISDNVLSLPNHKLISWSTQLISRLSSEPSKFQNLLKSLIVGLCYDHPYHSLYGLISLKKHESYANKSSNVLLISKSVAATDIWQQLLTRGDNKINEILLNIEKFCNESIKLAEYKVSKGKSIQLDSLKIGNYWLQVLPHIPPPTINLPVDLSTRYNNVIYFDRVVPKVSIATSGLSLPKIATFYLSNGSEHKVLLKHGTDDLRQDSIMEQVFEKVNNIFRKDKETRKRELKVRTYNAVPLGPETGIIEFVPNSIALIDVIRPYHSKIDTLKADKARDLMKTCQSEDKTERYKTYDKISKKISPVLKYFFFDNYVAPDIWFDTRTSYTRGIATTSMVGHILGLGDRHCNNILLDKTSGEPIHIDLGVAFDQGKRLPIPETVPFRLTRDIVDGFGITGVNGVFDKSCEHTYRVLRQNKDHILAILDVLRWDPLYSWSLSPIRRKKLQNEGDRNEVGNLKPQEDGSEGGRAVLMVSDKLTAGGLSVEAIVRELVQEATSPHNLALIYCGWCPFY</sequence>
<feature type="chain" id="PRO_0000227701" description="Serine/threonine-protein kinase TEL1">
    <location>
        <begin position="1"/>
        <end position="2948"/>
    </location>
</feature>
<feature type="domain" description="FAT" evidence="3">
    <location>
        <begin position="1898"/>
        <end position="2497"/>
    </location>
</feature>
<feature type="domain" description="PI3K/PI4K catalytic" evidence="2">
    <location>
        <begin position="2602"/>
        <end position="2915"/>
    </location>
</feature>
<feature type="domain" description="FATC" evidence="3 4">
    <location>
        <begin position="2916"/>
        <end position="2948"/>
    </location>
</feature>
<feature type="region of interest" description="G-loop" evidence="2">
    <location>
        <begin position="2608"/>
        <end position="2614"/>
    </location>
</feature>
<feature type="region of interest" description="Catalytic loop" evidence="2">
    <location>
        <begin position="2778"/>
        <end position="2786"/>
    </location>
</feature>
<feature type="region of interest" description="Activation loop" evidence="2">
    <location>
        <begin position="2798"/>
        <end position="2822"/>
    </location>
</feature>
<accession>Q6BV76</accession>
<proteinExistence type="inferred from homology"/>